<name>NH133_CAEEL</name>
<evidence type="ECO:0000255" key="1">
    <source>
        <dbReference type="PROSITE-ProRule" id="PRU00407"/>
    </source>
</evidence>
<evidence type="ECO:0000255" key="2">
    <source>
        <dbReference type="PROSITE-ProRule" id="PRU01189"/>
    </source>
</evidence>
<evidence type="ECO:0000305" key="3"/>
<evidence type="ECO:0000312" key="4">
    <source>
        <dbReference type="WormBase" id="F44C8.8a"/>
    </source>
</evidence>
<reference key="1">
    <citation type="journal article" date="1998" name="Science">
        <title>Genome sequence of the nematode C. elegans: a platform for investigating biology.</title>
        <authorList>
            <consortium name="The C. elegans sequencing consortium"/>
        </authorList>
    </citation>
    <scope>NUCLEOTIDE SEQUENCE [LARGE SCALE GENOMIC DNA]</scope>
    <source>
        <strain>Bristol N2</strain>
    </source>
</reference>
<dbReference type="EMBL" id="FO081357">
    <property type="protein sequence ID" value="CCD71010.1"/>
    <property type="molecule type" value="Genomic_DNA"/>
</dbReference>
<dbReference type="PIR" id="T31786">
    <property type="entry name" value="T31786"/>
</dbReference>
<dbReference type="RefSeq" id="NP_503602.1">
    <property type="nucleotide sequence ID" value="NM_071201.7"/>
</dbReference>
<dbReference type="SMR" id="O16354"/>
<dbReference type="BioGRID" id="50488">
    <property type="interactions" value="1"/>
</dbReference>
<dbReference type="DIP" id="DIP-26488N"/>
<dbReference type="FunCoup" id="O16354">
    <property type="interactions" value="51"/>
</dbReference>
<dbReference type="IntAct" id="O16354">
    <property type="interactions" value="1"/>
</dbReference>
<dbReference type="PaxDb" id="6239-F44C8.8"/>
<dbReference type="EnsemblMetazoa" id="F44C8.8a.1">
    <property type="protein sequence ID" value="F44C8.8a.1"/>
    <property type="gene ID" value="WBGene00003723"/>
</dbReference>
<dbReference type="GeneID" id="185729"/>
<dbReference type="KEGG" id="cel:CELE_F44C8.8"/>
<dbReference type="UCSC" id="F44C8.8">
    <property type="organism name" value="c. elegans"/>
</dbReference>
<dbReference type="AGR" id="WB:WBGene00003723"/>
<dbReference type="CTD" id="185729"/>
<dbReference type="WormBase" id="F44C8.8a">
    <property type="protein sequence ID" value="CE10392"/>
    <property type="gene ID" value="WBGene00003723"/>
    <property type="gene designation" value="nhr-133"/>
</dbReference>
<dbReference type="eggNOG" id="KOG3575">
    <property type="taxonomic scope" value="Eukaryota"/>
</dbReference>
<dbReference type="GeneTree" id="ENSGT00970000196079"/>
<dbReference type="HOGENOM" id="CLU_007368_7_1_1"/>
<dbReference type="InParanoid" id="O16354"/>
<dbReference type="OMA" id="MFETAHI"/>
<dbReference type="OrthoDB" id="5841316at2759"/>
<dbReference type="PhylomeDB" id="O16354"/>
<dbReference type="PRO" id="PR:O16354"/>
<dbReference type="Proteomes" id="UP000001940">
    <property type="component" value="Chromosome V"/>
</dbReference>
<dbReference type="Bgee" id="WBGene00003723">
    <property type="expression patterns" value="Expressed in pharyngeal muscle cell (C elegans) and 3 other cell types or tissues"/>
</dbReference>
<dbReference type="GO" id="GO:0005634">
    <property type="term" value="C:nucleus"/>
    <property type="evidence" value="ECO:0007669"/>
    <property type="project" value="UniProtKB-SubCell"/>
</dbReference>
<dbReference type="GO" id="GO:0003700">
    <property type="term" value="F:DNA-binding transcription factor activity"/>
    <property type="evidence" value="ECO:0007669"/>
    <property type="project" value="InterPro"/>
</dbReference>
<dbReference type="GO" id="GO:0043565">
    <property type="term" value="F:sequence-specific DNA binding"/>
    <property type="evidence" value="ECO:0007669"/>
    <property type="project" value="InterPro"/>
</dbReference>
<dbReference type="GO" id="GO:0008270">
    <property type="term" value="F:zinc ion binding"/>
    <property type="evidence" value="ECO:0007669"/>
    <property type="project" value="UniProtKB-KW"/>
</dbReference>
<dbReference type="Gene3D" id="3.30.50.10">
    <property type="entry name" value="Erythroid Transcription Factor GATA-1, subunit A"/>
    <property type="match status" value="1"/>
</dbReference>
<dbReference type="Gene3D" id="1.10.565.10">
    <property type="entry name" value="Retinoid X Receptor"/>
    <property type="match status" value="1"/>
</dbReference>
<dbReference type="InterPro" id="IPR051152">
    <property type="entry name" value="C.elegans_Orphan_NR"/>
</dbReference>
<dbReference type="InterPro" id="IPR035500">
    <property type="entry name" value="NHR-like_dom_sf"/>
</dbReference>
<dbReference type="InterPro" id="IPR000536">
    <property type="entry name" value="Nucl_hrmn_rcpt_lig-bd"/>
</dbReference>
<dbReference type="InterPro" id="IPR001628">
    <property type="entry name" value="Znf_hrmn_rcpt"/>
</dbReference>
<dbReference type="InterPro" id="IPR013088">
    <property type="entry name" value="Znf_NHR/GATA"/>
</dbReference>
<dbReference type="PANTHER" id="PTHR45680">
    <property type="entry name" value="NUCLEAR HORMONE RECEPTOR FAMILY"/>
    <property type="match status" value="1"/>
</dbReference>
<dbReference type="PANTHER" id="PTHR45680:SF9">
    <property type="entry name" value="NUCLEAR HORMONE RECEPTOR FAMILY-RELATED"/>
    <property type="match status" value="1"/>
</dbReference>
<dbReference type="Pfam" id="PF00104">
    <property type="entry name" value="Hormone_recep"/>
    <property type="match status" value="1"/>
</dbReference>
<dbReference type="Pfam" id="PF00105">
    <property type="entry name" value="zf-C4"/>
    <property type="match status" value="1"/>
</dbReference>
<dbReference type="PRINTS" id="PR00047">
    <property type="entry name" value="STROIDFINGER"/>
</dbReference>
<dbReference type="SMART" id="SM00430">
    <property type="entry name" value="HOLI"/>
    <property type="match status" value="1"/>
</dbReference>
<dbReference type="SMART" id="SM00399">
    <property type="entry name" value="ZnF_C4"/>
    <property type="match status" value="1"/>
</dbReference>
<dbReference type="SUPFAM" id="SSF57716">
    <property type="entry name" value="Glucocorticoid receptor-like (DNA-binding domain)"/>
    <property type="match status" value="1"/>
</dbReference>
<dbReference type="SUPFAM" id="SSF48508">
    <property type="entry name" value="Nuclear receptor ligand-binding domain"/>
    <property type="match status" value="1"/>
</dbReference>
<dbReference type="PROSITE" id="PS51843">
    <property type="entry name" value="NR_LBD"/>
    <property type="match status" value="1"/>
</dbReference>
<dbReference type="PROSITE" id="PS00031">
    <property type="entry name" value="NUCLEAR_REC_DBD_1"/>
    <property type="match status" value="1"/>
</dbReference>
<dbReference type="PROSITE" id="PS51030">
    <property type="entry name" value="NUCLEAR_REC_DBD_2"/>
    <property type="match status" value="1"/>
</dbReference>
<keyword id="KW-0238">DNA-binding</keyword>
<keyword id="KW-0479">Metal-binding</keyword>
<keyword id="KW-0539">Nucleus</keyword>
<keyword id="KW-0675">Receptor</keyword>
<keyword id="KW-1185">Reference proteome</keyword>
<keyword id="KW-0804">Transcription</keyword>
<keyword id="KW-0805">Transcription regulation</keyword>
<keyword id="KW-0862">Zinc</keyword>
<keyword id="KW-0863">Zinc-finger</keyword>
<sequence>MPPALYLSGPCEICEQPAHGNHFGVLSCRACAAFFRRAALQNAKYQDRVCRKGNCIGNDLYRCKICRLKKCCEVGMNSSKFQNDRDLISSSLRPTNYTKTSAPQSLANFLGRPEFILCCEPDKASSTKRLVDVTSLVDKAWAIFQEDAAYSWSPNHYPNSLEKLTFEMEEIKLKESSKKLEIATTIGRNEALLFLEQSFLGAAQWFARLPEFSMLDPQIKIDILKTSWMIWARLDKLAATADFHRQKLLGNDVYMWTDNTCMNPGNVKIDIKWSSNYSVEQLRGFLVPDIEKYWRHALSDLVELDPTNVELNFMLIQLCLNSAGQKYQGHVLEATEKILQIQSDNMHEYYTKKLKLVNYSGRLARLMKINRAIEADVRDRKEKNHIAKVFDLFFVEYSHPEMFEFS</sequence>
<organism>
    <name type="scientific">Caenorhabditis elegans</name>
    <dbReference type="NCBI Taxonomy" id="6239"/>
    <lineage>
        <taxon>Eukaryota</taxon>
        <taxon>Metazoa</taxon>
        <taxon>Ecdysozoa</taxon>
        <taxon>Nematoda</taxon>
        <taxon>Chromadorea</taxon>
        <taxon>Rhabditida</taxon>
        <taxon>Rhabditina</taxon>
        <taxon>Rhabditomorpha</taxon>
        <taxon>Rhabditoidea</taxon>
        <taxon>Rhabditidae</taxon>
        <taxon>Peloderinae</taxon>
        <taxon>Caenorhabditis</taxon>
    </lineage>
</organism>
<protein>
    <recommendedName>
        <fullName>Nuclear hormone receptor family member nhr-133</fullName>
    </recommendedName>
</protein>
<proteinExistence type="inferred from homology"/>
<feature type="chain" id="PRO_0000223594" description="Nuclear hormone receptor family member nhr-133">
    <location>
        <begin position="1"/>
        <end position="406"/>
    </location>
</feature>
<feature type="domain" description="NR LBD" evidence="2">
    <location>
        <begin position="150"/>
        <end position="406"/>
    </location>
</feature>
<feature type="DNA-binding region" description="Nuclear receptor" evidence="1">
    <location>
        <begin position="8"/>
        <end position="83"/>
    </location>
</feature>
<feature type="zinc finger region" description="NR C4-type" evidence="1">
    <location>
        <begin position="11"/>
        <end position="31"/>
    </location>
</feature>
<feature type="zinc finger region" description="NR C4-type; degenerate" evidence="1">
    <location>
        <begin position="47"/>
        <end position="66"/>
    </location>
</feature>
<accession>O16354</accession>
<gene>
    <name evidence="4" type="primary">nhr-133</name>
    <name evidence="4" type="ORF">F44C8.8</name>
</gene>
<comment type="function">
    <text>Orphan nuclear receptor.</text>
</comment>
<comment type="subcellular location">
    <subcellularLocation>
        <location evidence="1">Nucleus</location>
    </subcellularLocation>
</comment>
<comment type="similarity">
    <text evidence="3">Belongs to the nuclear hormone receptor family.</text>
</comment>